<protein>
    <recommendedName>
        <fullName evidence="8">Phenolphthiocerol/phthiocerol polyketide synthase subunit C</fullName>
        <ecNumber evidence="2">2.3.1.292</ecNumber>
    </recommendedName>
    <alternativeName>
        <fullName>(Phenol)carboxyphthiodiolenone synthase subunit C</fullName>
    </alternativeName>
    <alternativeName>
        <fullName>Beta-ketoacyl-acyl-carrier-protein synthase I</fullName>
    </alternativeName>
    <alternativeName>
        <fullName>Phthiocerol synthesis polyketide synthase type I PpsC</fullName>
    </alternativeName>
</protein>
<name>PPSC_MYCBO</name>
<gene>
    <name type="primary">ppsC</name>
    <name type="ordered locus">BQ2027_MB2958</name>
</gene>
<proteinExistence type="evidence at protein level"/>
<comment type="function">
    <text evidence="2 7">Part of the PpsABCDE complex involved in the biosynthesis of the lipid core common to phthiocerols and phenolphthiocerols by successive additions of malonyl-CoA or methylmalonyl-CoA extender units (PubMed:9201977). PpsA can accept as substrate the activated forms of either icosanoyl (C20), docosanoyl (C22) or lignoceroyl (C24) groups from FadD26, or a (4-hydroxyphenyl)-C17 or (4-hydroxyphenyl)-C19 fatty acyl from FadD29 (By similarity). PpsA initiates the biosynthesis and extends its substrate using a malonyl-CoA extender unit. The PpsB and PpsC proteins add the second and third malonyl-CoA extender units. PpsD adds an (R)-methylmalonyl unit and PpsE adds a second (R)-methylmalonyl unit. The incorporation of the methylmalonyl units results in formation of two branched methyl groups in the elongated product (By similarity).</text>
</comment>
<comment type="catalytic activity">
    <reaction evidence="2">
        <text>icosanoyl-[(phenol)carboxyphthiodiolenone synthase] + 2 (S)-methylmalonyl-CoA + 3 malonyl-CoA + 5 NADPH + 10 H(+) = C32-carboxyphthiodiolenone-[(phenol)carboxyphthiodiolenone synthase] + 5 CO2 + 5 NADP(+) + 5 CoA + 2 H2O</text>
        <dbReference type="Rhea" id="RHEA:57748"/>
        <dbReference type="Rhea" id="RHEA-COMP:14985"/>
        <dbReference type="Rhea" id="RHEA-COMP:14986"/>
        <dbReference type="ChEBI" id="CHEBI:15377"/>
        <dbReference type="ChEBI" id="CHEBI:15378"/>
        <dbReference type="ChEBI" id="CHEBI:16526"/>
        <dbReference type="ChEBI" id="CHEBI:57287"/>
        <dbReference type="ChEBI" id="CHEBI:57327"/>
        <dbReference type="ChEBI" id="CHEBI:57384"/>
        <dbReference type="ChEBI" id="CHEBI:57783"/>
        <dbReference type="ChEBI" id="CHEBI:58349"/>
        <dbReference type="ChEBI" id="CHEBI:87848"/>
        <dbReference type="ChEBI" id="CHEBI:142236"/>
        <dbReference type="EC" id="2.3.1.292"/>
    </reaction>
</comment>
<comment type="catalytic activity">
    <reaction evidence="2">
        <text>docosanoyl-[(phenol)carboxyphthiodiolenone synthase] + 2 (S)-methylmalonyl-CoA + 3 malonyl-CoA + 5 NADPH + 10 H(+) = C34-carboxyphthiodiolenone-[(phenol)carboxyphthiodiolenone synthase] + 5 CO2 + 5 NADP(+) + 5 CoA + 2 H2O</text>
        <dbReference type="Rhea" id="RHEA:57752"/>
        <dbReference type="Rhea" id="RHEA-COMP:14987"/>
        <dbReference type="Rhea" id="RHEA-COMP:14988"/>
        <dbReference type="ChEBI" id="CHEBI:15377"/>
        <dbReference type="ChEBI" id="CHEBI:15378"/>
        <dbReference type="ChEBI" id="CHEBI:16526"/>
        <dbReference type="ChEBI" id="CHEBI:57287"/>
        <dbReference type="ChEBI" id="CHEBI:57327"/>
        <dbReference type="ChEBI" id="CHEBI:57384"/>
        <dbReference type="ChEBI" id="CHEBI:57783"/>
        <dbReference type="ChEBI" id="CHEBI:58349"/>
        <dbReference type="ChEBI" id="CHEBI:142237"/>
        <dbReference type="ChEBI" id="CHEBI:142238"/>
        <dbReference type="EC" id="2.3.1.292"/>
    </reaction>
</comment>
<comment type="catalytic activity">
    <reaction evidence="2">
        <text>17-(4-hydroxyphenyl)heptadecanoyl-[(phenol)carboxyphthiodiolenone synthase] + 2 (S)-methylmalonyl-CoA + 3 malonyl-CoA + 5 NADPH + 10 H(+) = C35-(phenol)carboxyphthiodiolenone-[(phenol)carboxyphthiodiolenone synthase] + 5 CO2 + 5 NADP(+) + 5 CoA + 2 H2O</text>
        <dbReference type="Rhea" id="RHEA:57756"/>
        <dbReference type="Rhea" id="RHEA-COMP:14272"/>
        <dbReference type="Rhea" id="RHEA-COMP:14989"/>
        <dbReference type="ChEBI" id="CHEBI:15377"/>
        <dbReference type="ChEBI" id="CHEBI:15378"/>
        <dbReference type="ChEBI" id="CHEBI:16526"/>
        <dbReference type="ChEBI" id="CHEBI:57287"/>
        <dbReference type="ChEBI" id="CHEBI:57327"/>
        <dbReference type="ChEBI" id="CHEBI:57384"/>
        <dbReference type="ChEBI" id="CHEBI:57783"/>
        <dbReference type="ChEBI" id="CHEBI:58349"/>
        <dbReference type="ChEBI" id="CHEBI:133300"/>
        <dbReference type="ChEBI" id="CHEBI:142259"/>
        <dbReference type="EC" id="2.3.1.292"/>
    </reaction>
</comment>
<comment type="catalytic activity">
    <reaction evidence="2">
        <text>19-(4-hydroxyphenyl)nonadecanoyl-[(phenol)carboxyphthiodiolenone synthase] + 2 (S)-methylmalonyl-CoA + 3 malonyl-CoA + 5 NADPH + 10 H(+) = C37-(phenol)carboxyphthiodiolenone-[(phenol)carboxyphthiodiolenone synthase] + 5 CO2 + 5 NADP(+) + 5 CoA + 2 H2O</text>
        <dbReference type="Rhea" id="RHEA:57760"/>
        <dbReference type="Rhea" id="RHEA-COMP:14273"/>
        <dbReference type="Rhea" id="RHEA-COMP:14990"/>
        <dbReference type="ChEBI" id="CHEBI:15377"/>
        <dbReference type="ChEBI" id="CHEBI:15378"/>
        <dbReference type="ChEBI" id="CHEBI:16526"/>
        <dbReference type="ChEBI" id="CHEBI:57287"/>
        <dbReference type="ChEBI" id="CHEBI:57327"/>
        <dbReference type="ChEBI" id="CHEBI:57384"/>
        <dbReference type="ChEBI" id="CHEBI:57783"/>
        <dbReference type="ChEBI" id="CHEBI:58349"/>
        <dbReference type="ChEBI" id="CHEBI:133301"/>
        <dbReference type="ChEBI" id="CHEBI:142260"/>
        <dbReference type="EC" id="2.3.1.292"/>
    </reaction>
</comment>
<comment type="cofactor">
    <cofactor evidence="2">
        <name>NADP(+)</name>
        <dbReference type="ChEBI" id="CHEBI:58349"/>
    </cofactor>
</comment>
<comment type="cofactor">
    <cofactor evidence="2">
        <name>pantetheine 4'-phosphate</name>
        <dbReference type="ChEBI" id="CHEBI:47942"/>
    </cofactor>
    <text evidence="2">Binds 1 phosphopantetheine covalently.</text>
</comment>
<comment type="pathway">
    <text evidence="7">Lipid metabolism; fatty acid biosynthesis.</text>
</comment>
<comment type="subunit">
    <text evidence="1">Homodimer.</text>
</comment>
<comment type="disruption phenotype">
    <text evidence="7">Disruption of the pps gene cluster abolishes the production of both phthiocerol and phenolphthiocerol derivatives.</text>
</comment>
<evidence type="ECO:0000250" key="1"/>
<evidence type="ECO:0000250" key="2">
    <source>
        <dbReference type="UniProtKB" id="P96202"/>
    </source>
</evidence>
<evidence type="ECO:0000255" key="3">
    <source>
        <dbReference type="PROSITE-ProRule" id="PRU00258"/>
    </source>
</evidence>
<evidence type="ECO:0000255" key="4">
    <source>
        <dbReference type="PROSITE-ProRule" id="PRU01348"/>
    </source>
</evidence>
<evidence type="ECO:0000255" key="5">
    <source>
        <dbReference type="PROSITE-ProRule" id="PRU01363"/>
    </source>
</evidence>
<evidence type="ECO:0000255" key="6">
    <source>
        <dbReference type="PROSITE-ProRule" id="PRU10022"/>
    </source>
</evidence>
<evidence type="ECO:0000269" key="7">
    <source>
    </source>
</evidence>
<evidence type="ECO:0000305" key="8"/>
<organism>
    <name type="scientific">Mycobacterium bovis (strain ATCC BAA-935 / AF2122/97)</name>
    <dbReference type="NCBI Taxonomy" id="233413"/>
    <lineage>
        <taxon>Bacteria</taxon>
        <taxon>Bacillati</taxon>
        <taxon>Actinomycetota</taxon>
        <taxon>Actinomycetes</taxon>
        <taxon>Mycobacteriales</taxon>
        <taxon>Mycobacteriaceae</taxon>
        <taxon>Mycobacterium</taxon>
        <taxon>Mycobacterium tuberculosis complex</taxon>
    </lineage>
</organism>
<sequence length="2188" mass="230622">MTAATPDRRAIITEALHKIDDLTARLEIAEKSSSEPIAVIGMGCRFPGGVNNPEQFWDLLCAGRSGIVRVPAQRWDADAYYCDDHTVPGTICSTEGGFLTSWQPDEFDAEFFSISPREAAAMDPQQRLLIEVAWEALEDAGVPQHTIRGTQTSVFVGVTAYDYMLTLAGRLRPVDLDAYIPTGNSANFAAGRLAYILGARGPAVVIDTACSSSLVAVHLACQSLRGRESDMALVGGTNLLLSPGPSIACSRWGMLSPEGRCKTFDASADGYVRGEGAAVVVLKRLDDAVRDGNRILAVVRGSAVNQDGASSGVTVPNGPAQQALLAKALTSSKLTAADIDYVEAHGTGTPLGDPIELDSLSKVFSDRAGSDQLVIGSVKTNLGHLEAAAGVAGLMKAVLAVHNGYIPRHLNFHQLTPHASEAASRLRIAADGIDWPTTGRPRRAGVSSFGVSGTNAHVVIEQAPDPMAAAGTEPQRGPVPAVSTLVVFGKTAPRVAATASVLADWLDGPGAAVPLADVAHTLNHHRARQTRFGTVAAVDRRQAVIGLRALAAGQSAPGVVAPREGSIGGGTVFVYSGRGSQWAGMGRQLLADEPAFAAAIAELEPEFVAQGGFSLRDVIAGGKELVGIEQIQLGLIGMQLALTALWRSYGVTPDAVIGHSMGEVAAAVVAGALTPAQGLRVTAVRSRLMAPLSGQGTMALLELDAEATEALIADYPEVSLGIYASPRQTVISGPPLLIDELIDKVRQQNGFATRVNIEVAPHNPAMDALQPAMRSELADLTPQPPTIPIISTTYADLGISLGSGPRFDAEHWATNMRNPVRFHQAIAHAGADHHTFIEISAHPLLTHSISDTLRASYDVDNYLSIGTLQRDAHDTLEFHTNLNTTHTTHPPQTPHPPEPHPVLPTTPWQHTQHWITATSAAYHRPDTHPLLGVGVTDPTNGTRVWESELDPDLLWLADHVIDDLVVLPGAAYAEIALAAATDTFAVEQDQPWMISELDLRQMLHVTPGTVLVTTLTGDEQRCQVEIRTRSGSSGWTTHATATVARAEPLAPLDHEGQRREVTTADLEDQLDPDDLYQRLRGAGQQHGPAFQGIVGLAVTQAGVARAQVRLPASARTGSREFMLHPVMMDIALQTLGATRTATDLAGGQDARQGPSSNSALVVPVRFAGVHVYGDITRGVRAVGSLAAAGDRLVGEVVLTDANGQPLLVVDEVEMAVLGSGSGATELTNRLFMLEWEPAPLEKTAEATGALLLIGDPAAGDPLLPALQSSLRDRITDLELASAADEATLRAAISRTSWDGIVVVCPPRANDESMPDEAQLELARTRTLLVASVVETVTRMGARKSPRLWIVTRGAAQFDAGESVTLAQTGLRGIARVLTFEHSELNTTLVDIEPDGTGSLAALAEELLAGSEADEVALRDGQRYVNRLVPAPTTTSGDLAAEARHQVVNLDSSGASRAAVRLQIDQPGRLDALNVHEVKRGRPQGDQVEVRVVAAGLNFSDVLKAMGVYPGLDGAAPVIGGECVGYVTAIGDEVDGVEVGQRVIAFGPGTFGTHLGTIADLVVPIPDTLADNEAATFGVAYLTAWHSLCEVGRLSPGERVLIHSATGGVGMAAVSIAKMIGARIYTTAGSDAKREMLSRLGVEYVGDSRSVDFADEILELTDGYGVDVVLNSLAGEAIQRGVQILAPGGRFIELGKKDVYADASLGLAALAKSASFSVVDLDLNLKLQPARYRQLLQHILQHVADGKLEVLPVTAFSLHDAADAFRLMASGKHTGKIVISIPQHGSIEAIAAPPPLPLVSRDGGYLIVGGMGGLGFVVARWLAEQGAGLIVLNGRSAPSDEVAAAIAELNASGSRIEVITGDITEPDTAERLVRAVEDAGFRLAGVVHSAMVLADEIVLNMTDSAARRVFAPKVTGSWRLHVATAARDVDWWLTFSSAAALLGTPGQGAYAAANSWVDGLVAHRRSAGLPAVGINWGPWADVGRAQFFKDLGVEMINAEQGLAAMQAVLTADRGRTGVFSLDARQWFQSFPAVAGSSLFAKLHDSAARKSGQRRGGGAIRAQLDALDAAERPGHLASAIADEIRAVLRSGDPIDHHRPLETLGLDSLMGLELRNRLEASLGITLPVALVWAYPTISDLATALCERMDYATPAAAQEISDTEPELSDEEMDLLADLVDASELEAATRGES</sequence>
<reference key="1">
    <citation type="journal article" date="2003" name="Proc. Natl. Acad. Sci. U.S.A.">
        <title>The complete genome sequence of Mycobacterium bovis.</title>
        <authorList>
            <person name="Garnier T."/>
            <person name="Eiglmeier K."/>
            <person name="Camus J.-C."/>
            <person name="Medina N."/>
            <person name="Mansoor H."/>
            <person name="Pryor M."/>
            <person name="Duthoy S."/>
            <person name="Grondin S."/>
            <person name="Lacroix C."/>
            <person name="Monsempe C."/>
            <person name="Simon S."/>
            <person name="Harris B."/>
            <person name="Atkin R."/>
            <person name="Doggett J."/>
            <person name="Mayes R."/>
            <person name="Keating L."/>
            <person name="Wheeler P.R."/>
            <person name="Parkhill J."/>
            <person name="Barrell B.G."/>
            <person name="Cole S.T."/>
            <person name="Gordon S.V."/>
            <person name="Hewinson R.G."/>
        </authorList>
    </citation>
    <scope>NUCLEOTIDE SEQUENCE [LARGE SCALE GENOMIC DNA]</scope>
    <source>
        <strain>ATCC BAA-935 / AF2122/97</strain>
    </source>
</reference>
<reference key="2">
    <citation type="journal article" date="2017" name="Genome Announc.">
        <title>Updated reference genome sequence and annotation of Mycobacterium bovis AF2122/97.</title>
        <authorList>
            <person name="Malone K.M."/>
            <person name="Farrell D."/>
            <person name="Stuber T.P."/>
            <person name="Schubert O.T."/>
            <person name="Aebersold R."/>
            <person name="Robbe-Austerman S."/>
            <person name="Gordon S.V."/>
        </authorList>
    </citation>
    <scope>NUCLEOTIDE SEQUENCE [LARGE SCALE GENOMIC DNA]</scope>
    <scope>GENOME REANNOTATION</scope>
    <source>
        <strain>ATCC BAA-935 / AF2122/97</strain>
    </source>
</reference>
<reference key="3">
    <citation type="journal article" date="1997" name="J. Biol. Chem.">
        <title>Gene knockout reveals a novel gene cluster for the synthesis of a class of cell wall lipids unique to pathogenic mycobacteria.</title>
        <authorList>
            <person name="Azad A.K."/>
            <person name="Sirakova T.D."/>
            <person name="Fernandes N.D."/>
            <person name="Kolattukudy P.E."/>
        </authorList>
    </citation>
    <scope>FUNCTION IN THE PHTHIOCEROL AND PHENOLPHTHIOCEROL BIOSYNTHESIS</scope>
    <scope>PATHWAY</scope>
    <scope>DISRUPTION PHENOTYPE</scope>
    <source>
        <strain>BCG</strain>
    </source>
</reference>
<accession>Q7TXL8</accession>
<accession>A0A1R3Y2L7</accession>
<accession>X2BMJ1</accession>
<feature type="chain" id="PRO_0000406947" description="Phenolphthiocerol/phthiocerol polyketide synthase subunit C">
    <location>
        <begin position="1"/>
        <end position="2188"/>
    </location>
</feature>
<feature type="domain" description="Ketosynthase family 3 (KS3)" evidence="4">
    <location>
        <begin position="34"/>
        <end position="462"/>
    </location>
</feature>
<feature type="domain" description="PKS/mFAS DH" evidence="5">
    <location>
        <begin position="928"/>
        <end position="1223"/>
    </location>
</feature>
<feature type="domain" description="Carrier" evidence="3">
    <location>
        <begin position="2069"/>
        <end position="2145"/>
    </location>
</feature>
<feature type="region of interest" description="Acyltransferase" evidence="1">
    <location>
        <begin position="572"/>
        <end position="890"/>
    </location>
</feature>
<feature type="region of interest" description="Dehydratase" evidence="1">
    <location>
        <begin position="928"/>
        <end position="1093"/>
    </location>
</feature>
<feature type="region of interest" description="N-terminal hotdog fold" evidence="5">
    <location>
        <begin position="928"/>
        <end position="1050"/>
    </location>
</feature>
<feature type="region of interest" description="C-terminal hotdog fold" evidence="5">
    <location>
        <begin position="1067"/>
        <end position="1223"/>
    </location>
</feature>
<feature type="region of interest" description="Enoylreductase" evidence="1">
    <location>
        <begin position="1467"/>
        <end position="1778"/>
    </location>
</feature>
<feature type="region of interest" description="Beta-ketoacyl reductase" evidence="1">
    <location>
        <begin position="1802"/>
        <end position="1981"/>
    </location>
</feature>
<feature type="active site" description="For beta-ketoacyl synthase activity" evidence="4">
    <location>
        <position position="210"/>
    </location>
</feature>
<feature type="active site" description="For beta-ketoacyl synthase activity" evidence="4">
    <location>
        <position position="345"/>
    </location>
</feature>
<feature type="active site" description="For beta-ketoacyl synthase activity" evidence="4">
    <location>
        <position position="384"/>
    </location>
</feature>
<feature type="active site" description="For malonyltransferase activity" evidence="6">
    <location>
        <position position="660"/>
    </location>
</feature>
<feature type="active site" description="Proton acceptor; for dehydratase activity" evidence="5">
    <location>
        <position position="959"/>
    </location>
</feature>
<feature type="active site" description="Proton donor; for dehydratase activity" evidence="5">
    <location>
        <position position="1129"/>
    </location>
</feature>
<feature type="binding site" evidence="1">
    <location>
        <begin position="1803"/>
        <end position="1848"/>
    </location>
    <ligand>
        <name>NADP(+)</name>
        <dbReference type="ChEBI" id="CHEBI:58349"/>
    </ligand>
</feature>
<feature type="modified residue" description="O-(pantetheine 4'-phosphoryl)serine" evidence="3">
    <location>
        <position position="2105"/>
    </location>
</feature>
<keyword id="KW-0276">Fatty acid metabolism</keyword>
<keyword id="KW-0443">Lipid metabolism</keyword>
<keyword id="KW-0511">Multifunctional enzyme</keyword>
<keyword id="KW-0521">NADP</keyword>
<keyword id="KW-0560">Oxidoreductase</keyword>
<keyword id="KW-0596">Phosphopantetheine</keyword>
<keyword id="KW-0597">Phosphoprotein</keyword>
<keyword id="KW-1185">Reference proteome</keyword>
<keyword id="KW-0808">Transferase</keyword>
<dbReference type="EC" id="2.3.1.292" evidence="2"/>
<dbReference type="EMBL" id="LT708304">
    <property type="protein sequence ID" value="SIU01579.1"/>
    <property type="molecule type" value="Genomic_DNA"/>
</dbReference>
<dbReference type="RefSeq" id="NP_856603.1">
    <property type="nucleotide sequence ID" value="NC_002945.3"/>
</dbReference>
<dbReference type="RefSeq" id="WP_003414837.1">
    <property type="nucleotide sequence ID" value="NC_002945.4"/>
</dbReference>
<dbReference type="SMR" id="Q7TXL8"/>
<dbReference type="KEGG" id="mbo:BQ2027_MB2958"/>
<dbReference type="PATRIC" id="fig|233413.5.peg.3246"/>
<dbReference type="BioCyc" id="MetaCyc:MONOMER-19628"/>
<dbReference type="UniPathway" id="UPA00094"/>
<dbReference type="Proteomes" id="UP000001419">
    <property type="component" value="Chromosome"/>
</dbReference>
<dbReference type="GO" id="GO:0005886">
    <property type="term" value="C:plasma membrane"/>
    <property type="evidence" value="ECO:0007669"/>
    <property type="project" value="TreeGrafter"/>
</dbReference>
<dbReference type="GO" id="GO:0034081">
    <property type="term" value="C:polyketide synthase complex"/>
    <property type="evidence" value="ECO:0000315"/>
    <property type="project" value="UniProtKB"/>
</dbReference>
<dbReference type="GO" id="GO:0004315">
    <property type="term" value="F:3-oxoacyl-[acyl-carrier-protein] synthase activity"/>
    <property type="evidence" value="ECO:0007669"/>
    <property type="project" value="InterPro"/>
</dbReference>
<dbReference type="GO" id="GO:0004312">
    <property type="term" value="F:fatty acid synthase activity"/>
    <property type="evidence" value="ECO:0007669"/>
    <property type="project" value="TreeGrafter"/>
</dbReference>
<dbReference type="GO" id="GO:0016491">
    <property type="term" value="F:oxidoreductase activity"/>
    <property type="evidence" value="ECO:0007669"/>
    <property type="project" value="UniProtKB-KW"/>
</dbReference>
<dbReference type="GO" id="GO:0031177">
    <property type="term" value="F:phosphopantetheine binding"/>
    <property type="evidence" value="ECO:0007669"/>
    <property type="project" value="InterPro"/>
</dbReference>
<dbReference type="GO" id="GO:0071766">
    <property type="term" value="P:Actinobacterium-type cell wall biogenesis"/>
    <property type="evidence" value="ECO:0000315"/>
    <property type="project" value="UniProtKB"/>
</dbReference>
<dbReference type="GO" id="GO:0071770">
    <property type="term" value="P:DIM/DIP cell wall layer assembly"/>
    <property type="evidence" value="ECO:0007669"/>
    <property type="project" value="TreeGrafter"/>
</dbReference>
<dbReference type="GO" id="GO:0006633">
    <property type="term" value="P:fatty acid biosynthetic process"/>
    <property type="evidence" value="ECO:0007669"/>
    <property type="project" value="UniProtKB-UniPathway"/>
</dbReference>
<dbReference type="GO" id="GO:0097041">
    <property type="term" value="P:phenolic phthiocerol biosynthetic process"/>
    <property type="evidence" value="ECO:0000315"/>
    <property type="project" value="UniProtKB"/>
</dbReference>
<dbReference type="GO" id="GO:0097040">
    <property type="term" value="P:phthiocerol biosynthetic process"/>
    <property type="evidence" value="ECO:0000315"/>
    <property type="project" value="UniProtKB"/>
</dbReference>
<dbReference type="CDD" id="cd05195">
    <property type="entry name" value="enoyl_red"/>
    <property type="match status" value="1"/>
</dbReference>
<dbReference type="CDD" id="cd00833">
    <property type="entry name" value="PKS"/>
    <property type="match status" value="1"/>
</dbReference>
<dbReference type="FunFam" id="3.10.129.110:FF:000007">
    <property type="entry name" value="Phthiocerol synthesis polyketide synthase type I PpsC"/>
    <property type="match status" value="1"/>
</dbReference>
<dbReference type="FunFam" id="3.30.70.250:FF:000003">
    <property type="entry name" value="Polyketide beta-ketoacyl synthase Pks3"/>
    <property type="match status" value="1"/>
</dbReference>
<dbReference type="FunFam" id="3.40.50.720:FF:000209">
    <property type="entry name" value="Polyketide synthase Pks12"/>
    <property type="match status" value="1"/>
</dbReference>
<dbReference type="FunFam" id="3.40.47.10:FF:000019">
    <property type="entry name" value="Polyketide synthase type I"/>
    <property type="match status" value="1"/>
</dbReference>
<dbReference type="Gene3D" id="3.40.47.10">
    <property type="match status" value="1"/>
</dbReference>
<dbReference type="Gene3D" id="1.10.1200.10">
    <property type="entry name" value="ACP-like"/>
    <property type="match status" value="1"/>
</dbReference>
<dbReference type="Gene3D" id="3.30.70.250">
    <property type="entry name" value="Malonyl-CoA ACP transacylase, ACP-binding"/>
    <property type="match status" value="1"/>
</dbReference>
<dbReference type="Gene3D" id="3.40.366.10">
    <property type="entry name" value="Malonyl-Coenzyme A Acyl Carrier Protein, domain 2"/>
    <property type="match status" value="1"/>
</dbReference>
<dbReference type="Gene3D" id="3.90.180.10">
    <property type="entry name" value="Medium-chain alcohol dehydrogenases, catalytic domain"/>
    <property type="match status" value="1"/>
</dbReference>
<dbReference type="Gene3D" id="3.40.50.720">
    <property type="entry name" value="NAD(P)-binding Rossmann-like Domain"/>
    <property type="match status" value="3"/>
</dbReference>
<dbReference type="Gene3D" id="3.10.129.110">
    <property type="entry name" value="Polyketide synthase dehydratase"/>
    <property type="match status" value="1"/>
</dbReference>
<dbReference type="InterPro" id="IPR001227">
    <property type="entry name" value="Ac_transferase_dom_sf"/>
</dbReference>
<dbReference type="InterPro" id="IPR036736">
    <property type="entry name" value="ACP-like_sf"/>
</dbReference>
<dbReference type="InterPro" id="IPR014043">
    <property type="entry name" value="Acyl_transferase_dom"/>
</dbReference>
<dbReference type="InterPro" id="IPR016035">
    <property type="entry name" value="Acyl_Trfase/lysoPLipase"/>
</dbReference>
<dbReference type="InterPro" id="IPR013154">
    <property type="entry name" value="ADH-like_N"/>
</dbReference>
<dbReference type="InterPro" id="IPR011032">
    <property type="entry name" value="GroES-like_sf"/>
</dbReference>
<dbReference type="InterPro" id="IPR018201">
    <property type="entry name" value="Ketoacyl_synth_AS"/>
</dbReference>
<dbReference type="InterPro" id="IPR014031">
    <property type="entry name" value="Ketoacyl_synth_C"/>
</dbReference>
<dbReference type="InterPro" id="IPR014030">
    <property type="entry name" value="Ketoacyl_synth_N"/>
</dbReference>
<dbReference type="InterPro" id="IPR016036">
    <property type="entry name" value="Malonyl_transacylase_ACP-bd"/>
</dbReference>
<dbReference type="InterPro" id="IPR036291">
    <property type="entry name" value="NAD(P)-bd_dom_sf"/>
</dbReference>
<dbReference type="InterPro" id="IPR020841">
    <property type="entry name" value="PKS_Beta-ketoAc_synthase_dom"/>
</dbReference>
<dbReference type="InterPro" id="IPR042104">
    <property type="entry name" value="PKS_dehydratase_sf"/>
</dbReference>
<dbReference type="InterPro" id="IPR020807">
    <property type="entry name" value="PKS_DH"/>
</dbReference>
<dbReference type="InterPro" id="IPR049551">
    <property type="entry name" value="PKS_DH_C"/>
</dbReference>
<dbReference type="InterPro" id="IPR049552">
    <property type="entry name" value="PKS_DH_N"/>
</dbReference>
<dbReference type="InterPro" id="IPR020843">
    <property type="entry name" value="PKS_ER"/>
</dbReference>
<dbReference type="InterPro" id="IPR013968">
    <property type="entry name" value="PKS_KR"/>
</dbReference>
<dbReference type="InterPro" id="IPR049900">
    <property type="entry name" value="PKS_mFAS_DH"/>
</dbReference>
<dbReference type="InterPro" id="IPR050091">
    <property type="entry name" value="PKS_NRPS_Biosynth_Enz"/>
</dbReference>
<dbReference type="InterPro" id="IPR020806">
    <property type="entry name" value="PKS_PP-bd"/>
</dbReference>
<dbReference type="InterPro" id="IPR009081">
    <property type="entry name" value="PP-bd_ACP"/>
</dbReference>
<dbReference type="InterPro" id="IPR006162">
    <property type="entry name" value="Ppantetheine_attach_site"/>
</dbReference>
<dbReference type="InterPro" id="IPR016039">
    <property type="entry name" value="Thiolase-like"/>
</dbReference>
<dbReference type="PANTHER" id="PTHR43775">
    <property type="entry name" value="FATTY ACID SYNTHASE"/>
    <property type="match status" value="1"/>
</dbReference>
<dbReference type="PANTHER" id="PTHR43775:SF37">
    <property type="entry name" value="SI:DKEY-61P9.11"/>
    <property type="match status" value="1"/>
</dbReference>
<dbReference type="Pfam" id="PF00698">
    <property type="entry name" value="Acyl_transf_1"/>
    <property type="match status" value="1"/>
</dbReference>
<dbReference type="Pfam" id="PF08240">
    <property type="entry name" value="ADH_N"/>
    <property type="match status" value="1"/>
</dbReference>
<dbReference type="Pfam" id="PF13602">
    <property type="entry name" value="ADH_zinc_N_2"/>
    <property type="match status" value="1"/>
</dbReference>
<dbReference type="Pfam" id="PF00109">
    <property type="entry name" value="ketoacyl-synt"/>
    <property type="match status" value="1"/>
</dbReference>
<dbReference type="Pfam" id="PF02801">
    <property type="entry name" value="Ketoacyl-synt_C"/>
    <property type="match status" value="1"/>
</dbReference>
<dbReference type="Pfam" id="PF08659">
    <property type="entry name" value="KR"/>
    <property type="match status" value="1"/>
</dbReference>
<dbReference type="Pfam" id="PF21089">
    <property type="entry name" value="PKS_DH_N"/>
    <property type="match status" value="1"/>
</dbReference>
<dbReference type="Pfam" id="PF00550">
    <property type="entry name" value="PP-binding"/>
    <property type="match status" value="1"/>
</dbReference>
<dbReference type="Pfam" id="PF14765">
    <property type="entry name" value="PS-DH"/>
    <property type="match status" value="1"/>
</dbReference>
<dbReference type="SMART" id="SM00827">
    <property type="entry name" value="PKS_AT"/>
    <property type="match status" value="1"/>
</dbReference>
<dbReference type="SMART" id="SM00826">
    <property type="entry name" value="PKS_DH"/>
    <property type="match status" value="1"/>
</dbReference>
<dbReference type="SMART" id="SM00829">
    <property type="entry name" value="PKS_ER"/>
    <property type="match status" value="1"/>
</dbReference>
<dbReference type="SMART" id="SM00822">
    <property type="entry name" value="PKS_KR"/>
    <property type="match status" value="1"/>
</dbReference>
<dbReference type="SMART" id="SM00825">
    <property type="entry name" value="PKS_KS"/>
    <property type="match status" value="1"/>
</dbReference>
<dbReference type="SMART" id="SM00823">
    <property type="entry name" value="PKS_PP"/>
    <property type="match status" value="1"/>
</dbReference>
<dbReference type="SUPFAM" id="SSF47336">
    <property type="entry name" value="ACP-like"/>
    <property type="match status" value="1"/>
</dbReference>
<dbReference type="SUPFAM" id="SSF52151">
    <property type="entry name" value="FabD/lysophospholipase-like"/>
    <property type="match status" value="1"/>
</dbReference>
<dbReference type="SUPFAM" id="SSF50129">
    <property type="entry name" value="GroES-like"/>
    <property type="match status" value="1"/>
</dbReference>
<dbReference type="SUPFAM" id="SSF51735">
    <property type="entry name" value="NAD(P)-binding Rossmann-fold domains"/>
    <property type="match status" value="3"/>
</dbReference>
<dbReference type="SUPFAM" id="SSF55048">
    <property type="entry name" value="Probable ACP-binding domain of malonyl-CoA ACP transacylase"/>
    <property type="match status" value="1"/>
</dbReference>
<dbReference type="SUPFAM" id="SSF53901">
    <property type="entry name" value="Thiolase-like"/>
    <property type="match status" value="1"/>
</dbReference>
<dbReference type="PROSITE" id="PS50075">
    <property type="entry name" value="CARRIER"/>
    <property type="match status" value="1"/>
</dbReference>
<dbReference type="PROSITE" id="PS00606">
    <property type="entry name" value="KS3_1"/>
    <property type="match status" value="1"/>
</dbReference>
<dbReference type="PROSITE" id="PS52004">
    <property type="entry name" value="KS3_2"/>
    <property type="match status" value="1"/>
</dbReference>
<dbReference type="PROSITE" id="PS00012">
    <property type="entry name" value="PHOSPHOPANTETHEINE"/>
    <property type="match status" value="1"/>
</dbReference>
<dbReference type="PROSITE" id="PS52019">
    <property type="entry name" value="PKS_MFAS_DH"/>
    <property type="match status" value="1"/>
</dbReference>